<evidence type="ECO:0000255" key="1">
    <source>
        <dbReference type="HAMAP-Rule" id="MF_01452"/>
    </source>
</evidence>
<dbReference type="EC" id="3.1.-.-" evidence="1"/>
<dbReference type="EMBL" id="AP009351">
    <property type="protein sequence ID" value="BAF67109.1"/>
    <property type="molecule type" value="Genomic_DNA"/>
</dbReference>
<dbReference type="RefSeq" id="WP_000172345.1">
    <property type="nucleotide sequence ID" value="NZ_JBBIAE010000002.1"/>
</dbReference>
<dbReference type="SMR" id="A6QFH7"/>
<dbReference type="KEGG" id="sae:NWMN_0837"/>
<dbReference type="HOGENOM" id="CLU_007838_0_0_9"/>
<dbReference type="Proteomes" id="UP000006386">
    <property type="component" value="Chromosome"/>
</dbReference>
<dbReference type="GO" id="GO:0051539">
    <property type="term" value="F:4 iron, 4 sulfur cluster binding"/>
    <property type="evidence" value="ECO:0007669"/>
    <property type="project" value="UniProtKB-KW"/>
</dbReference>
<dbReference type="GO" id="GO:0008409">
    <property type="term" value="F:5'-3' exonuclease activity"/>
    <property type="evidence" value="ECO:0007669"/>
    <property type="project" value="UniProtKB-UniRule"/>
</dbReference>
<dbReference type="GO" id="GO:0005524">
    <property type="term" value="F:ATP binding"/>
    <property type="evidence" value="ECO:0007669"/>
    <property type="project" value="UniProtKB-UniRule"/>
</dbReference>
<dbReference type="GO" id="GO:0003690">
    <property type="term" value="F:double-stranded DNA binding"/>
    <property type="evidence" value="ECO:0007669"/>
    <property type="project" value="UniProtKB-UniRule"/>
</dbReference>
<dbReference type="GO" id="GO:0004386">
    <property type="term" value="F:helicase activity"/>
    <property type="evidence" value="ECO:0007669"/>
    <property type="project" value="UniProtKB-KW"/>
</dbReference>
<dbReference type="GO" id="GO:0046872">
    <property type="term" value="F:metal ion binding"/>
    <property type="evidence" value="ECO:0007669"/>
    <property type="project" value="UniProtKB-KW"/>
</dbReference>
<dbReference type="GO" id="GO:0000724">
    <property type="term" value="P:double-strand break repair via homologous recombination"/>
    <property type="evidence" value="ECO:0007669"/>
    <property type="project" value="UniProtKB-UniRule"/>
</dbReference>
<dbReference type="Gene3D" id="3.90.320.10">
    <property type="match status" value="1"/>
</dbReference>
<dbReference type="Gene3D" id="3.40.50.300">
    <property type="entry name" value="P-loop containing nucleotide triphosphate hydrolases"/>
    <property type="match status" value="4"/>
</dbReference>
<dbReference type="HAMAP" id="MF_01452">
    <property type="entry name" value="AddB_type1"/>
    <property type="match status" value="1"/>
</dbReference>
<dbReference type="InterPro" id="IPR049035">
    <property type="entry name" value="ADDB_N"/>
</dbReference>
<dbReference type="InterPro" id="IPR014140">
    <property type="entry name" value="DNA_helicase_suAddB"/>
</dbReference>
<dbReference type="InterPro" id="IPR014017">
    <property type="entry name" value="DNA_helicase_UvrD-like_C"/>
</dbReference>
<dbReference type="InterPro" id="IPR027417">
    <property type="entry name" value="P-loop_NTPase"/>
</dbReference>
<dbReference type="InterPro" id="IPR011604">
    <property type="entry name" value="PDDEXK-like_dom_sf"/>
</dbReference>
<dbReference type="InterPro" id="IPR038726">
    <property type="entry name" value="PDDEXK_AddAB-type"/>
</dbReference>
<dbReference type="NCBIfam" id="TIGR02773">
    <property type="entry name" value="addB_Gpos"/>
    <property type="match status" value="1"/>
</dbReference>
<dbReference type="PANTHER" id="PTHR30591">
    <property type="entry name" value="RECBCD ENZYME SUBUNIT RECC"/>
    <property type="match status" value="1"/>
</dbReference>
<dbReference type="PANTHER" id="PTHR30591:SF1">
    <property type="entry name" value="RECBCD ENZYME SUBUNIT RECC"/>
    <property type="match status" value="1"/>
</dbReference>
<dbReference type="Pfam" id="PF21445">
    <property type="entry name" value="ADDB_N"/>
    <property type="match status" value="1"/>
</dbReference>
<dbReference type="Pfam" id="PF12705">
    <property type="entry name" value="PDDEXK_1"/>
    <property type="match status" value="1"/>
</dbReference>
<dbReference type="SUPFAM" id="SSF52540">
    <property type="entry name" value="P-loop containing nucleoside triphosphate hydrolases"/>
    <property type="match status" value="1"/>
</dbReference>
<dbReference type="PROSITE" id="PS51198">
    <property type="entry name" value="UVRD_HELICASE_ATP_BIND"/>
    <property type="match status" value="1"/>
</dbReference>
<dbReference type="PROSITE" id="PS51217">
    <property type="entry name" value="UVRD_HELICASE_CTER"/>
    <property type="match status" value="1"/>
</dbReference>
<sequence length="1158" mass="134491">MTLHAYLGRAGTGKSTKMLTEIKQKMKADPLGDPIILIAPTQSTFQLEQAFVNDPELNGSLRTEVLHFERLSHRIFQEVGSYSEQKLSKAATEMMIYNIVQEQQKYLKLYQSQAKYYGFSEKLTEQIQDFKKYAVTPEHLEHFIADKNMQTRTKNKLEDIALIYREFEQRIQNEFITGEDSLQYFIDCMPKSEWLKRADIYIDGFHNFSTIEYLIIKGLIKYAKSVTIILTTDGNHDQFSLFRKPSEVLRHIEEIANELNISIERQYFNQLYRFNNQDLKHLEQEFDALQINRVACQGHINILESATMREEINEIARRIIVDIRDKQLRYQDIAILYRDESYAYLFDSILPLYNIPYNIDTKRSMTHHPVMEMIRSLIEVIQSNWQVNPMLRLLKTDVLTASYLKSAYLVDLLENFVLERGIYGKRWLDDELFNVEHFSKMGRKGHKLTEDERNTFEQVVKLKKDVIDKILHFEKQMSQAETVKDFATAFYESMEYFELPNQLMTERDELDLNGNHEKAEEIDQIWNGLIQILDDLVLVFGDEPMSMERFLEVFDIGLEQLEFVMIPQTLDQVSIGTMDLAKVDNKQHVYLVGMNDGTMPQPVTASSLITDEEKKYFEQQANVELSPTSDILQMDEAFVCYVAMTRAKGDVTFSYSLMGSSGDDKEISPFLNQIQSLFNQLEITNIPQYHEVNPLSLMQHAKQTKITLFEALRAWLYDEIVADSWLDAYQVIRDSDHLNQGLDYLMSALTFDNETVKLGETLSKDLYGKEINASVSRFEGYQQCPFKHYASHGLKLNERTKYELQNFDLGDIFHSVLKYISERINGDFKQLDLKKIRQLTNEALEEILPKVQFNLLNSSAYYRYLSRRIGAIVETTLSALKYQGTYSKFMPKHFETSFRRKPRTNDELIAQTLTTTQGIPINIRGQIDRIDTYTKNDTSFVNIIDYKSSEGSATLDLTKVYYGMQMQMMTYMDIVLQNKQRLGLTDIVKPGGLLYFHVHEPRIKFKSWSDIDEDKLEQDLIKKFKLSGLVNADQTVIDALDIRLEPKFTSDIVPVGLNKDGSLSKRGSQVADEATIYKFIQHNKENFIETASNIMDGHTEVAPLKYKQKLPCAFCSYQSVCHVDGMIDSKRYRTVDETINPIEAIQNININDEFGGEQ</sequence>
<feature type="chain" id="PRO_0000379215" description="ATP-dependent helicase/deoxyribonuclease subunit B">
    <location>
        <begin position="1"/>
        <end position="1158"/>
    </location>
</feature>
<feature type="domain" description="UvrD-like helicase ATP-binding" evidence="1">
    <location>
        <begin position="1"/>
        <end position="275"/>
    </location>
</feature>
<feature type="domain" description="UvrD-like helicase C-terminal" evidence="1">
    <location>
        <begin position="269"/>
        <end position="583"/>
    </location>
</feature>
<feature type="binding site" evidence="1">
    <location>
        <begin position="8"/>
        <end position="15"/>
    </location>
    <ligand>
        <name>ATP</name>
        <dbReference type="ChEBI" id="CHEBI:30616"/>
    </ligand>
</feature>
<feature type="binding site" evidence="1">
    <location>
        <position position="784"/>
    </location>
    <ligand>
        <name>[4Fe-4S] cluster</name>
        <dbReference type="ChEBI" id="CHEBI:49883"/>
    </ligand>
</feature>
<feature type="binding site" evidence="1">
    <location>
        <position position="1112"/>
    </location>
    <ligand>
        <name>[4Fe-4S] cluster</name>
        <dbReference type="ChEBI" id="CHEBI:49883"/>
    </ligand>
</feature>
<feature type="binding site" evidence="1">
    <location>
        <position position="1115"/>
    </location>
    <ligand>
        <name>[4Fe-4S] cluster</name>
        <dbReference type="ChEBI" id="CHEBI:49883"/>
    </ligand>
</feature>
<feature type="binding site" evidence="1">
    <location>
        <position position="1121"/>
    </location>
    <ligand>
        <name>[4Fe-4S] cluster</name>
        <dbReference type="ChEBI" id="CHEBI:49883"/>
    </ligand>
</feature>
<reference key="1">
    <citation type="journal article" date="2008" name="J. Bacteriol.">
        <title>Genome sequence of Staphylococcus aureus strain Newman and comparative analysis of staphylococcal genomes: polymorphism and evolution of two major pathogenicity islands.</title>
        <authorList>
            <person name="Baba T."/>
            <person name="Bae T."/>
            <person name="Schneewind O."/>
            <person name="Takeuchi F."/>
            <person name="Hiramatsu K."/>
        </authorList>
    </citation>
    <scope>NUCLEOTIDE SEQUENCE [LARGE SCALE GENOMIC DNA]</scope>
    <source>
        <strain>Newman</strain>
    </source>
</reference>
<keyword id="KW-0004">4Fe-4S</keyword>
<keyword id="KW-0067">ATP-binding</keyword>
<keyword id="KW-0227">DNA damage</keyword>
<keyword id="KW-0234">DNA repair</keyword>
<keyword id="KW-0238">DNA-binding</keyword>
<keyword id="KW-0269">Exonuclease</keyword>
<keyword id="KW-0347">Helicase</keyword>
<keyword id="KW-0378">Hydrolase</keyword>
<keyword id="KW-0408">Iron</keyword>
<keyword id="KW-0411">Iron-sulfur</keyword>
<keyword id="KW-0479">Metal-binding</keyword>
<keyword id="KW-0540">Nuclease</keyword>
<keyword id="KW-0547">Nucleotide-binding</keyword>
<organism>
    <name type="scientific">Staphylococcus aureus (strain Newman)</name>
    <dbReference type="NCBI Taxonomy" id="426430"/>
    <lineage>
        <taxon>Bacteria</taxon>
        <taxon>Bacillati</taxon>
        <taxon>Bacillota</taxon>
        <taxon>Bacilli</taxon>
        <taxon>Bacillales</taxon>
        <taxon>Staphylococcaceae</taxon>
        <taxon>Staphylococcus</taxon>
    </lineage>
</organism>
<name>ADDB_STAAE</name>
<comment type="function">
    <text evidence="1">The heterodimer acts as both an ATP-dependent DNA helicase and an ATP-dependent, dual-direction single-stranded exonuclease. Recognizes the chi site generating a DNA molecule suitable for the initiation of homologous recombination. The AddB subunit has 5' -&gt; 3' nuclease activity but not helicase activity.</text>
</comment>
<comment type="cofactor">
    <cofactor evidence="1">
        <name>Mg(2+)</name>
        <dbReference type="ChEBI" id="CHEBI:18420"/>
    </cofactor>
</comment>
<comment type="cofactor">
    <cofactor evidence="1">
        <name>[4Fe-4S] cluster</name>
        <dbReference type="ChEBI" id="CHEBI:49883"/>
    </cofactor>
    <text evidence="1">Binds 1 [4Fe-4S] cluster.</text>
</comment>
<comment type="subunit">
    <text evidence="1">Heterodimer of AddA and AddB.</text>
</comment>
<comment type="miscellaneous">
    <text evidence="1">Despite having conserved helicase domains, this subunit does not have helicase activity.</text>
</comment>
<comment type="similarity">
    <text evidence="1">Belongs to the helicase family. AddB/RexB type 1 subfamily.</text>
</comment>
<gene>
    <name evidence="1" type="primary">addB</name>
    <name type="synonym">rexB</name>
    <name type="ordered locus">NWMN_0837</name>
</gene>
<proteinExistence type="inferred from homology"/>
<protein>
    <recommendedName>
        <fullName evidence="1">ATP-dependent helicase/deoxyribonuclease subunit B</fullName>
        <ecNumber evidence="1">3.1.-.-</ecNumber>
    </recommendedName>
    <alternativeName>
        <fullName evidence="1">ATP-dependent helicase/nuclease subunit AddB</fullName>
    </alternativeName>
</protein>
<accession>A6QFH7</accession>